<sequence>MSLLQPMRDMAAKMKTLCFKIMNFEHLDGSYTSESKLENGGHWAVRFVSSKTAKSTKRRLSVYLVCFPATDNPEWSISTSFAFRFLNSWGNSKTKISPLCTHTFTAKDNSKGASGFCAWDDIVTPNSGFLVNGVFTIEFDLSISRTTGYQIEKKDHTSFLADGKLIVEDQTIDVCLALLADNSPVLYDMIYNENPGQTEFEIFDFTYDSILGMVSILQLDEFKVNVRNYRDLLELGQRYQIVAVMDQCEEFLLRTKKVSIETKLKLSETFQLHFLQFRTIERIQCMERLEAILDENIDIEDKTYEALLEKMKQLKSQEEKESCSCKKKHCGRSRV</sequence>
<proteinExistence type="predicted"/>
<accession>A8X2W2</accession>
<gene>
    <name evidence="3" type="primary">bath-39</name>
    <name type="ORF">CBG06699</name>
</gene>
<name>BAT39_CAEBR</name>
<organism>
    <name type="scientific">Caenorhabditis briggsae</name>
    <dbReference type="NCBI Taxonomy" id="6238"/>
    <lineage>
        <taxon>Eukaryota</taxon>
        <taxon>Metazoa</taxon>
        <taxon>Ecdysozoa</taxon>
        <taxon>Nematoda</taxon>
        <taxon>Chromadorea</taxon>
        <taxon>Rhabditida</taxon>
        <taxon>Rhabditina</taxon>
        <taxon>Rhabditomorpha</taxon>
        <taxon>Rhabditoidea</taxon>
        <taxon>Rhabditidae</taxon>
        <taxon>Peloderinae</taxon>
        <taxon>Caenorhabditis</taxon>
    </lineage>
</organism>
<reference evidence="3" key="1">
    <citation type="journal article" date="2003" name="PLoS Biol.">
        <title>The genome sequence of Caenorhabditis briggsae: a platform for comparative genomics.</title>
        <authorList>
            <person name="Stein L.D."/>
            <person name="Bao Z."/>
            <person name="Blasiar D."/>
            <person name="Blumenthal T."/>
            <person name="Brent M.R."/>
            <person name="Chen N."/>
            <person name="Chinwalla A."/>
            <person name="Clarke L."/>
            <person name="Clee C."/>
            <person name="Coghlan A."/>
            <person name="Coulson A."/>
            <person name="D'Eustachio P."/>
            <person name="Fitch D.H.A."/>
            <person name="Fulton L.A."/>
            <person name="Fulton R.E."/>
            <person name="Griffiths-Jones S."/>
            <person name="Harris T.W."/>
            <person name="Hillier L.W."/>
            <person name="Kamath R."/>
            <person name="Kuwabara P.E."/>
            <person name="Mardis E.R."/>
            <person name="Marra M.A."/>
            <person name="Miner T.L."/>
            <person name="Minx P."/>
            <person name="Mullikin J.C."/>
            <person name="Plumb R.W."/>
            <person name="Rogers J."/>
            <person name="Schein J.E."/>
            <person name="Sohrmann M."/>
            <person name="Spieth J."/>
            <person name="Stajich J.E."/>
            <person name="Wei C."/>
            <person name="Willey D."/>
            <person name="Wilson R.K."/>
            <person name="Durbin R.M."/>
            <person name="Waterston R.H."/>
        </authorList>
    </citation>
    <scope>NUCLEOTIDE SEQUENCE [LARGE SCALE GENOMIC DNA]</scope>
    <source>
        <strain evidence="3">AF16</strain>
    </source>
</reference>
<evidence type="ECO:0000255" key="1"/>
<evidence type="ECO:0000255" key="2">
    <source>
        <dbReference type="PROSITE-ProRule" id="PRU00129"/>
    </source>
</evidence>
<evidence type="ECO:0000312" key="3">
    <source>
        <dbReference type="EMBL" id="CAP26972.2"/>
    </source>
</evidence>
<feature type="chain" id="PRO_0000365628" description="BTB and MATH domain-containing protein 39">
    <location>
        <begin position="1"/>
        <end position="335"/>
    </location>
</feature>
<feature type="domain" description="MATH" evidence="2">
    <location>
        <begin position="14"/>
        <end position="141"/>
    </location>
</feature>
<feature type="domain" description="BTB" evidence="1">
    <location>
        <begin position="161"/>
        <end position="226"/>
    </location>
</feature>
<protein>
    <recommendedName>
        <fullName evidence="3">BTB and MATH domain-containing protein 39</fullName>
    </recommendedName>
</protein>
<keyword id="KW-1185">Reference proteome</keyword>
<dbReference type="EMBL" id="HE601320">
    <property type="protein sequence ID" value="CAP26972.2"/>
    <property type="molecule type" value="Genomic_DNA"/>
</dbReference>
<dbReference type="SMR" id="A8X2W2"/>
<dbReference type="FunCoup" id="A8X2W2">
    <property type="interactions" value="1"/>
</dbReference>
<dbReference type="EnsemblMetazoa" id="CBG06699.1">
    <property type="protein sequence ID" value="CBG06699.1"/>
    <property type="gene ID" value="WBGene00028939"/>
</dbReference>
<dbReference type="WormBase" id="CBG06699">
    <property type="protein sequence ID" value="CBP28061"/>
    <property type="gene ID" value="WBGene00028939"/>
    <property type="gene designation" value="Cbr-bath-39"/>
</dbReference>
<dbReference type="eggNOG" id="ENOG502TIY6">
    <property type="taxonomic scope" value="Eukaryota"/>
</dbReference>
<dbReference type="HOGENOM" id="CLU_832185_0_0_1"/>
<dbReference type="InParanoid" id="A8X2W2"/>
<dbReference type="OMA" id="CSCKRNH"/>
<dbReference type="Proteomes" id="UP000008549">
    <property type="component" value="Unassembled WGS sequence"/>
</dbReference>
<dbReference type="CDD" id="cd01165">
    <property type="entry name" value="BTB_POZ"/>
    <property type="match status" value="1"/>
</dbReference>
<dbReference type="CDD" id="cd00121">
    <property type="entry name" value="MATH"/>
    <property type="match status" value="1"/>
</dbReference>
<dbReference type="Gene3D" id="2.60.210.10">
    <property type="entry name" value="Apoptosis, Tumor Necrosis Factor Receptor Associated Protein 2, Chain A"/>
    <property type="match status" value="1"/>
</dbReference>
<dbReference type="Gene3D" id="3.30.710.10">
    <property type="entry name" value="Potassium Channel Kv1.1, Chain A"/>
    <property type="match status" value="1"/>
</dbReference>
<dbReference type="InterPro" id="IPR000210">
    <property type="entry name" value="BTB/POZ_dom"/>
</dbReference>
<dbReference type="InterPro" id="IPR002083">
    <property type="entry name" value="MATH/TRAF_dom"/>
</dbReference>
<dbReference type="InterPro" id="IPR011333">
    <property type="entry name" value="SKP1/BTB/POZ_sf"/>
</dbReference>
<dbReference type="InterPro" id="IPR008974">
    <property type="entry name" value="TRAF-like"/>
</dbReference>
<dbReference type="PANTHER" id="PTHR47022">
    <property type="entry name" value="BTB AND MATH DOMAIN-CONTAINING PROTEIN 36-RELATED"/>
    <property type="match status" value="1"/>
</dbReference>
<dbReference type="PANTHER" id="PTHR47022:SF3">
    <property type="entry name" value="BTB AND MATH DOMAIN-CONTAINING PROTEIN 39"/>
    <property type="match status" value="1"/>
</dbReference>
<dbReference type="Pfam" id="PF00651">
    <property type="entry name" value="BTB"/>
    <property type="match status" value="1"/>
</dbReference>
<dbReference type="Pfam" id="PF22486">
    <property type="entry name" value="MATH_2"/>
    <property type="match status" value="1"/>
</dbReference>
<dbReference type="SMART" id="SM00225">
    <property type="entry name" value="BTB"/>
    <property type="match status" value="1"/>
</dbReference>
<dbReference type="SMART" id="SM00061">
    <property type="entry name" value="MATH"/>
    <property type="match status" value="1"/>
</dbReference>
<dbReference type="SUPFAM" id="SSF54695">
    <property type="entry name" value="POZ domain"/>
    <property type="match status" value="1"/>
</dbReference>
<dbReference type="SUPFAM" id="SSF49599">
    <property type="entry name" value="TRAF domain-like"/>
    <property type="match status" value="1"/>
</dbReference>
<dbReference type="PROSITE" id="PS50144">
    <property type="entry name" value="MATH"/>
    <property type="match status" value="1"/>
</dbReference>